<protein>
    <recommendedName>
        <fullName>Movement protein TGB2</fullName>
    </recommendedName>
    <alternativeName>
        <fullName>13 kDa protein</fullName>
    </alternativeName>
    <alternativeName>
        <fullName>P13</fullName>
    </alternativeName>
    <alternativeName>
        <fullName>Triple gene block 2 protein</fullName>
        <shortName>TGBp2</shortName>
    </alternativeName>
</protein>
<keyword id="KW-1031">Host cell junction</keyword>
<keyword id="KW-1038">Host endoplasmic reticulum</keyword>
<keyword id="KW-1043">Host membrane</keyword>
<keyword id="KW-0472">Membrane</keyword>
<keyword id="KW-1185">Reference proteome</keyword>
<keyword id="KW-0812">Transmembrane</keyword>
<keyword id="KW-1133">Transmembrane helix</keyword>
<keyword id="KW-0813">Transport</keyword>
<keyword id="KW-0916">Viral movement protein</keyword>
<feature type="chain" id="PRO_0000412276" description="Movement protein TGB2">
    <location>
        <begin position="1"/>
        <end position="118"/>
    </location>
</feature>
<feature type="topological domain" description="Cytoplasmic" evidence="2">
    <location>
        <begin position="1"/>
        <end position="11"/>
    </location>
</feature>
<feature type="transmembrane region" description="Helical" evidence="2">
    <location>
        <begin position="12"/>
        <end position="32"/>
    </location>
</feature>
<feature type="topological domain" description="Lumenal" evidence="2">
    <location>
        <begin position="33"/>
        <end position="81"/>
    </location>
</feature>
<feature type="transmembrane region" description="Helical" evidence="2">
    <location>
        <begin position="82"/>
        <end position="102"/>
    </location>
</feature>
<feature type="topological domain" description="Cytoplasmic" evidence="2">
    <location>
        <begin position="103"/>
        <end position="118"/>
    </location>
</feature>
<evidence type="ECO:0000250" key="1"/>
<evidence type="ECO:0000255" key="2"/>
<evidence type="ECO:0000269" key="3">
    <source>
    </source>
</evidence>
<evidence type="ECO:0000305" key="4"/>
<name>TGB2_BNYVS</name>
<dbReference type="EMBL" id="D84411">
    <property type="protein sequence ID" value="BAA12343.1"/>
    <property type="molecule type" value="Genomic_RNA"/>
</dbReference>
<dbReference type="RefSeq" id="NP_612618.1">
    <property type="nucleotide sequence ID" value="NC_003515.1"/>
</dbReference>
<dbReference type="GeneID" id="991085"/>
<dbReference type="KEGG" id="vg:991085"/>
<dbReference type="Proteomes" id="UP000001100">
    <property type="component" value="Genome"/>
</dbReference>
<dbReference type="GO" id="GO:0044167">
    <property type="term" value="C:host cell endoplasmic reticulum membrane"/>
    <property type="evidence" value="ECO:0007669"/>
    <property type="project" value="UniProtKB-SubCell"/>
</dbReference>
<dbReference type="GO" id="GO:0044219">
    <property type="term" value="C:host cell plasmodesma"/>
    <property type="evidence" value="ECO:0007669"/>
    <property type="project" value="UniProtKB-SubCell"/>
</dbReference>
<dbReference type="GO" id="GO:0016020">
    <property type="term" value="C:membrane"/>
    <property type="evidence" value="ECO:0007669"/>
    <property type="project" value="UniProtKB-KW"/>
</dbReference>
<dbReference type="GO" id="GO:0046740">
    <property type="term" value="P:transport of virus in host, cell to cell"/>
    <property type="evidence" value="ECO:0007669"/>
    <property type="project" value="UniProtKB-KW"/>
</dbReference>
<dbReference type="InterPro" id="IPR001896">
    <property type="entry name" value="Plant_vir_prot"/>
</dbReference>
<dbReference type="Pfam" id="PF01307">
    <property type="entry name" value="Plant_vir_prot"/>
    <property type="match status" value="1"/>
</dbReference>
<proteinExistence type="inferred from homology"/>
<accession>Q65675</accession>
<reference key="1">
    <citation type="journal article" date="1996" name="Arch. Virol.">
        <title>Complete nucleotide sequence of the Japanese isolate S of beet necrotic yellow vein virus RNA and comparison with European isolates.</title>
        <authorList>
            <person name="Saito M."/>
            <person name="Kiguchi T."/>
            <person name="Kusume T."/>
            <person name="Tamada T."/>
        </authorList>
    </citation>
    <scope>NUCLEOTIDE SEQUENCE [GENOMIC RNA]</scope>
</reference>
<reference key="2">
    <citation type="journal article" date="2000" name="Mol. Plant Microbe Interact.">
        <title>P42 movement protein of Beet necrotic yellow vein virus is targeted by the movement proteins P13 and P15 to punctate bodies associated with plasmodesmata.</title>
        <authorList>
            <person name="Erhardt M."/>
            <person name="Morant M."/>
            <person name="Ritzenthaler C."/>
            <person name="Stussi-Garaud C."/>
            <person name="Guilley H."/>
            <person name="Richards K."/>
            <person name="Jonard G."/>
            <person name="Bouzoubaa S."/>
            <person name="Gilmer D."/>
        </authorList>
    </citation>
    <scope>FUNCTION</scope>
    <scope>SUBCELLULAR LOCATION</scope>
</reference>
<reference key="3">
    <citation type="journal article" date="2005" name="Virology">
        <title>Subcellular localization of the triple gene block movement proteins of Beet necrotic yellow vein virus by electron microscopy.</title>
        <authorList>
            <person name="Erhardt M."/>
            <person name="Vetter G."/>
            <person name="Gilmer D."/>
            <person name="Bouzoubaa S."/>
            <person name="Richards K."/>
            <person name="Jonard G."/>
            <person name="Guilley H."/>
        </authorList>
    </citation>
    <scope>SUBCELLULAR LOCATION</scope>
</reference>
<comment type="function">
    <text evidence="1 3">Participates in the transport of viral RNA to the plasmodesmata. Is probably targeted to plasmodesmata by TGBp3, along with viral RNAs-TGBp1 (RNP complex). Can gate plasmodesmata and increase their size exclusion limit (By similarity).</text>
</comment>
<comment type="subunit">
    <text evidence="1">Interacts with movement protein TGB3.</text>
</comment>
<comment type="subcellular location">
    <subcellularLocation>
        <location evidence="4">Host cell junction</location>
        <location evidence="4">Host plasmodesma</location>
    </subcellularLocation>
    <subcellularLocation>
        <location evidence="4">Host endoplasmic reticulum membrane</location>
        <topology evidence="4">Multi-pass membrane protein</topology>
    </subcellularLocation>
    <text evidence="4">localizes to plasmodesmata or plasmodesmata-associated membrane compartments called peripheral membrane bodies (PMBs).</text>
</comment>
<comment type="similarity">
    <text evidence="4">Belongs to the virgaviridae/benyvirus TGB2 movement protein family.</text>
</comment>
<organism>
    <name type="scientific">Beet necrotic yellow vein virus (isolate Japan/S)</name>
    <name type="common">BNYVV</name>
    <dbReference type="NCBI Taxonomy" id="652670"/>
    <lineage>
        <taxon>Viruses</taxon>
        <taxon>Riboviria</taxon>
        <taxon>Orthornavirae</taxon>
        <taxon>Kitrinoviricota</taxon>
        <taxon>Alsuviricetes</taxon>
        <taxon>Hepelivirales</taxon>
        <taxon>Benyviridae</taxon>
        <taxon>Benyvirus</taxon>
        <taxon>Beet necrotic yellow vein virus</taxon>
    </lineage>
</organism>
<sequence length="118" mass="12518">MSREITARPNKNVPIVVGVCVVAFFVLLAFMQQKHKTHSGGDYGVPTFSNGGKYRDGTRSADFNSNNHRAYGCGGSGGSVSSRVGQQLVVLAIVSVLIVSLLQRLRSPPEHICNGACG</sequence>
<organismHost>
    <name type="scientific">Beta macrocarpa</name>
    <name type="common">Beet</name>
    <name type="synonym">Beta vulgaris subsp. macrocarpa</name>
    <dbReference type="NCBI Taxonomy" id="343494"/>
</organismHost>
<organismHost>
    <name type="scientific">Beta vulgaris</name>
    <name type="common">Sugar beet</name>
    <dbReference type="NCBI Taxonomy" id="161934"/>
</organismHost>
<organismHost>
    <name type="scientific">Spinacia oleracea</name>
    <name type="common">Spinach</name>
    <dbReference type="NCBI Taxonomy" id="3562"/>
</organismHost>